<proteinExistence type="inferred from homology"/>
<gene>
    <name evidence="1" type="primary">ileS1</name>
    <name type="ordered locus">BT9727_3637</name>
</gene>
<dbReference type="EC" id="6.1.1.5" evidence="1"/>
<dbReference type="EMBL" id="AE017355">
    <property type="protein sequence ID" value="AAT63892.1"/>
    <property type="molecule type" value="Genomic_DNA"/>
</dbReference>
<dbReference type="RefSeq" id="YP_037957.1">
    <property type="nucleotide sequence ID" value="NC_005957.1"/>
</dbReference>
<dbReference type="SMR" id="Q6HER9"/>
<dbReference type="KEGG" id="btk:BT9727_3637"/>
<dbReference type="PATRIC" id="fig|281309.8.peg.3875"/>
<dbReference type="HOGENOM" id="CLU_001493_7_0_9"/>
<dbReference type="Proteomes" id="UP000001301">
    <property type="component" value="Chromosome"/>
</dbReference>
<dbReference type="GO" id="GO:0005829">
    <property type="term" value="C:cytosol"/>
    <property type="evidence" value="ECO:0007669"/>
    <property type="project" value="TreeGrafter"/>
</dbReference>
<dbReference type="GO" id="GO:0002161">
    <property type="term" value="F:aminoacyl-tRNA deacylase activity"/>
    <property type="evidence" value="ECO:0007669"/>
    <property type="project" value="InterPro"/>
</dbReference>
<dbReference type="GO" id="GO:0005524">
    <property type="term" value="F:ATP binding"/>
    <property type="evidence" value="ECO:0007669"/>
    <property type="project" value="UniProtKB-UniRule"/>
</dbReference>
<dbReference type="GO" id="GO:0004822">
    <property type="term" value="F:isoleucine-tRNA ligase activity"/>
    <property type="evidence" value="ECO:0007669"/>
    <property type="project" value="UniProtKB-UniRule"/>
</dbReference>
<dbReference type="GO" id="GO:0000049">
    <property type="term" value="F:tRNA binding"/>
    <property type="evidence" value="ECO:0007669"/>
    <property type="project" value="InterPro"/>
</dbReference>
<dbReference type="GO" id="GO:0008270">
    <property type="term" value="F:zinc ion binding"/>
    <property type="evidence" value="ECO:0007669"/>
    <property type="project" value="UniProtKB-UniRule"/>
</dbReference>
<dbReference type="GO" id="GO:0006428">
    <property type="term" value="P:isoleucyl-tRNA aminoacylation"/>
    <property type="evidence" value="ECO:0007669"/>
    <property type="project" value="UniProtKB-UniRule"/>
</dbReference>
<dbReference type="CDD" id="cd07960">
    <property type="entry name" value="Anticodon_Ia_Ile_BEm"/>
    <property type="match status" value="1"/>
</dbReference>
<dbReference type="CDD" id="cd00818">
    <property type="entry name" value="IleRS_core"/>
    <property type="match status" value="1"/>
</dbReference>
<dbReference type="FunFam" id="1.10.10.830:FF:000001">
    <property type="entry name" value="Isoleucine--tRNA ligase"/>
    <property type="match status" value="1"/>
</dbReference>
<dbReference type="FunFam" id="1.10.730.20:FF:000001">
    <property type="entry name" value="Isoleucine--tRNA ligase"/>
    <property type="match status" value="1"/>
</dbReference>
<dbReference type="FunFam" id="3.40.50.620:FF:000152">
    <property type="entry name" value="Isoleucine--tRNA ligase"/>
    <property type="match status" value="1"/>
</dbReference>
<dbReference type="FunFam" id="3.90.740.10:FF:000006">
    <property type="entry name" value="Isoleucine--tRNA ligase"/>
    <property type="match status" value="1"/>
</dbReference>
<dbReference type="Gene3D" id="1.10.730.20">
    <property type="match status" value="1"/>
</dbReference>
<dbReference type="Gene3D" id="3.40.50.620">
    <property type="entry name" value="HUPs"/>
    <property type="match status" value="2"/>
</dbReference>
<dbReference type="Gene3D" id="1.10.10.830">
    <property type="entry name" value="Ile-tRNA synthetase CP2 domain-like"/>
    <property type="match status" value="1"/>
</dbReference>
<dbReference type="Gene3D" id="3.90.740.10">
    <property type="entry name" value="Valyl/Leucyl/Isoleucyl-tRNA synthetase, editing domain"/>
    <property type="match status" value="1"/>
</dbReference>
<dbReference type="HAMAP" id="MF_02002">
    <property type="entry name" value="Ile_tRNA_synth_type1"/>
    <property type="match status" value="1"/>
</dbReference>
<dbReference type="InterPro" id="IPR001412">
    <property type="entry name" value="aa-tRNA-synth_I_CS"/>
</dbReference>
<dbReference type="InterPro" id="IPR002300">
    <property type="entry name" value="aa-tRNA-synth_Ia"/>
</dbReference>
<dbReference type="InterPro" id="IPR033708">
    <property type="entry name" value="Anticodon_Ile_BEm"/>
</dbReference>
<dbReference type="InterPro" id="IPR002301">
    <property type="entry name" value="Ile-tRNA-ligase"/>
</dbReference>
<dbReference type="InterPro" id="IPR023585">
    <property type="entry name" value="Ile-tRNA-ligase_type1"/>
</dbReference>
<dbReference type="InterPro" id="IPR050081">
    <property type="entry name" value="Ile-tRNA_ligase"/>
</dbReference>
<dbReference type="InterPro" id="IPR013155">
    <property type="entry name" value="M/V/L/I-tRNA-synth_anticd-bd"/>
</dbReference>
<dbReference type="InterPro" id="IPR014729">
    <property type="entry name" value="Rossmann-like_a/b/a_fold"/>
</dbReference>
<dbReference type="InterPro" id="IPR009080">
    <property type="entry name" value="tRNAsynth_Ia_anticodon-bd"/>
</dbReference>
<dbReference type="InterPro" id="IPR009008">
    <property type="entry name" value="Val/Leu/Ile-tRNA-synth_edit"/>
</dbReference>
<dbReference type="InterPro" id="IPR010663">
    <property type="entry name" value="Znf_FPG/IleRS"/>
</dbReference>
<dbReference type="NCBIfam" id="TIGR00392">
    <property type="entry name" value="ileS"/>
    <property type="match status" value="1"/>
</dbReference>
<dbReference type="PANTHER" id="PTHR42765:SF1">
    <property type="entry name" value="ISOLEUCINE--TRNA LIGASE, MITOCHONDRIAL"/>
    <property type="match status" value="1"/>
</dbReference>
<dbReference type="PANTHER" id="PTHR42765">
    <property type="entry name" value="SOLEUCYL-TRNA SYNTHETASE"/>
    <property type="match status" value="1"/>
</dbReference>
<dbReference type="Pfam" id="PF08264">
    <property type="entry name" value="Anticodon_1"/>
    <property type="match status" value="1"/>
</dbReference>
<dbReference type="Pfam" id="PF00133">
    <property type="entry name" value="tRNA-synt_1"/>
    <property type="match status" value="1"/>
</dbReference>
<dbReference type="Pfam" id="PF06827">
    <property type="entry name" value="zf-FPG_IleRS"/>
    <property type="match status" value="1"/>
</dbReference>
<dbReference type="PRINTS" id="PR00984">
    <property type="entry name" value="TRNASYNTHILE"/>
</dbReference>
<dbReference type="SUPFAM" id="SSF47323">
    <property type="entry name" value="Anticodon-binding domain of a subclass of class I aminoacyl-tRNA synthetases"/>
    <property type="match status" value="1"/>
</dbReference>
<dbReference type="SUPFAM" id="SSF52374">
    <property type="entry name" value="Nucleotidylyl transferase"/>
    <property type="match status" value="1"/>
</dbReference>
<dbReference type="SUPFAM" id="SSF50677">
    <property type="entry name" value="ValRS/IleRS/LeuRS editing domain"/>
    <property type="match status" value="1"/>
</dbReference>
<dbReference type="PROSITE" id="PS00178">
    <property type="entry name" value="AA_TRNA_LIGASE_I"/>
    <property type="match status" value="1"/>
</dbReference>
<name>SYI1_BACHK</name>
<accession>Q6HER9</accession>
<protein>
    <recommendedName>
        <fullName evidence="1">Isoleucine--tRNA ligase 1</fullName>
        <ecNumber evidence="1">6.1.1.5</ecNumber>
    </recommendedName>
    <alternativeName>
        <fullName evidence="1">Isoleucyl-tRNA synthetase 1</fullName>
        <shortName evidence="1">IleRS 1</shortName>
    </alternativeName>
</protein>
<keyword id="KW-0030">Aminoacyl-tRNA synthetase</keyword>
<keyword id="KW-0067">ATP-binding</keyword>
<keyword id="KW-0963">Cytoplasm</keyword>
<keyword id="KW-0436">Ligase</keyword>
<keyword id="KW-0479">Metal-binding</keyword>
<keyword id="KW-0547">Nucleotide-binding</keyword>
<keyword id="KW-0648">Protein biosynthesis</keyword>
<keyword id="KW-0862">Zinc</keyword>
<reference key="1">
    <citation type="journal article" date="2006" name="J. Bacteriol.">
        <title>Pathogenomic sequence analysis of Bacillus cereus and Bacillus thuringiensis isolates closely related to Bacillus anthracis.</title>
        <authorList>
            <person name="Han C.S."/>
            <person name="Xie G."/>
            <person name="Challacombe J.F."/>
            <person name="Altherr M.R."/>
            <person name="Bhotika S.S."/>
            <person name="Bruce D."/>
            <person name="Campbell C.S."/>
            <person name="Campbell M.L."/>
            <person name="Chen J."/>
            <person name="Chertkov O."/>
            <person name="Cleland C."/>
            <person name="Dimitrijevic M."/>
            <person name="Doggett N.A."/>
            <person name="Fawcett J.J."/>
            <person name="Glavina T."/>
            <person name="Goodwin L.A."/>
            <person name="Hill K.K."/>
            <person name="Hitchcock P."/>
            <person name="Jackson P.J."/>
            <person name="Keim P."/>
            <person name="Kewalramani A.R."/>
            <person name="Longmire J."/>
            <person name="Lucas S."/>
            <person name="Malfatti S."/>
            <person name="McMurry K."/>
            <person name="Meincke L.J."/>
            <person name="Misra M."/>
            <person name="Moseman B.L."/>
            <person name="Mundt M."/>
            <person name="Munk A.C."/>
            <person name="Okinaka R.T."/>
            <person name="Parson-Quintana B."/>
            <person name="Reilly L.P."/>
            <person name="Richardson P."/>
            <person name="Robinson D.L."/>
            <person name="Rubin E."/>
            <person name="Saunders E."/>
            <person name="Tapia R."/>
            <person name="Tesmer J.G."/>
            <person name="Thayer N."/>
            <person name="Thompson L.S."/>
            <person name="Tice H."/>
            <person name="Ticknor L.O."/>
            <person name="Wills P.L."/>
            <person name="Brettin T.S."/>
            <person name="Gilna P."/>
        </authorList>
    </citation>
    <scope>NUCLEOTIDE SEQUENCE [LARGE SCALE GENOMIC DNA]</scope>
    <source>
        <strain>97-27</strain>
    </source>
</reference>
<sequence length="921" mass="104634">MEYKNTLLMPKTEFPMRGNLPKREPAMQEKWAEMNIYEKVQEHTKGRPLFVLHDGPPYANGDIHMGHALNKVLKDFIVRYKSMTGFCAPYVPGWDTHGLPIEQALTNKGVKRKEMTVAEFRKLCAEYAYEQVERQREQFKRLGVRADWDNPYITLEPAYEAQQIKVFGDMAKKGYIYKGQKPVYWSPTSESALAEAEIEYQDKKSASIYVAFPVKDGKNVLEGDEKYIIWTTTPWTLPANLGISVHPELEYAIVKVNDEKYIIASELFETVAKTLEWENAEVVKTVKGSELEYTVAKHPFYDRDSLVMLGDHVTTDAGTGCVHTAPGHGEDDFVVGKKYGLEVLCPVDDKGVLTEEAPGFEGLFYDKANKPITEKLEEVGALLKLTFITHSYPHDWRTKKPIIFRATAQWFASIEAFRKELLEAVAETKWVPAWGETRLHNMVRDRGDWCISRQRAWGVPIPVFYAENGDPIITDETINHVADLFREHGSNVWFEREAKDLLPEGFTHPGSPNGEFRKETDIMDVWFDSGSSHQAVLEERDDLQRPADLYLEGSDQYRGWFNSSLSTAVAVTGKAPYKGVLSHGFVLDGEGRKMSKSIGNIVVPKKIMDQLGGDILRLWVSSVDYQSDVRISDDILKQVAEVYRKIRNTFRFLLGNLDDFKPSENTVAVAELREVDRYMLVKLNDLITKVKEAYETYDFAAVYHAIHNFCTIDLSSFYLDFAKDILYIEGANHEDRRAIQTVLYDVLVALTKLVTPILPHTADEVWPYIPGVTEESVQLTDMPEAVQLDDAEALKTKWDAFMTLRDDVLKALEVARNEKVIGKSLNASITLYPTAEMKAMLESINEDLKQLFIVSEYKLGGMMEEAPADAPKYEHTAVVVAQATGETCERCWVVSETIGKDAEHETLCERCATVVKENYVK</sequence>
<comment type="function">
    <text evidence="1">Catalyzes the attachment of isoleucine to tRNA(Ile). As IleRS can inadvertently accommodate and process structurally similar amino acids such as valine, to avoid such errors it has two additional distinct tRNA(Ile)-dependent editing activities. One activity is designated as 'pretransfer' editing and involves the hydrolysis of activated Val-AMP. The other activity is designated 'posttransfer' editing and involves deacylation of mischarged Val-tRNA(Ile).</text>
</comment>
<comment type="catalytic activity">
    <reaction evidence="1">
        <text>tRNA(Ile) + L-isoleucine + ATP = L-isoleucyl-tRNA(Ile) + AMP + diphosphate</text>
        <dbReference type="Rhea" id="RHEA:11060"/>
        <dbReference type="Rhea" id="RHEA-COMP:9666"/>
        <dbReference type="Rhea" id="RHEA-COMP:9695"/>
        <dbReference type="ChEBI" id="CHEBI:30616"/>
        <dbReference type="ChEBI" id="CHEBI:33019"/>
        <dbReference type="ChEBI" id="CHEBI:58045"/>
        <dbReference type="ChEBI" id="CHEBI:78442"/>
        <dbReference type="ChEBI" id="CHEBI:78528"/>
        <dbReference type="ChEBI" id="CHEBI:456215"/>
        <dbReference type="EC" id="6.1.1.5"/>
    </reaction>
</comment>
<comment type="cofactor">
    <cofactor evidence="1">
        <name>Zn(2+)</name>
        <dbReference type="ChEBI" id="CHEBI:29105"/>
    </cofactor>
    <text evidence="1">Binds 1 zinc ion per subunit.</text>
</comment>
<comment type="subunit">
    <text evidence="1">Monomer.</text>
</comment>
<comment type="subcellular location">
    <subcellularLocation>
        <location evidence="1">Cytoplasm</location>
    </subcellularLocation>
</comment>
<comment type="domain">
    <text evidence="1">IleRS has two distinct active sites: one for aminoacylation and one for editing. The misactivated valine is translocated from the active site to the editing site, which sterically excludes the correctly activated isoleucine. The single editing site contains two valyl binding pockets, one specific for each substrate (Val-AMP or Val-tRNA(Ile)).</text>
</comment>
<comment type="similarity">
    <text evidence="1">Belongs to the class-I aminoacyl-tRNA synthetase family. IleS type 1 subfamily.</text>
</comment>
<organism>
    <name type="scientific">Bacillus thuringiensis subsp. konkukian (strain 97-27)</name>
    <dbReference type="NCBI Taxonomy" id="281309"/>
    <lineage>
        <taxon>Bacteria</taxon>
        <taxon>Bacillati</taxon>
        <taxon>Bacillota</taxon>
        <taxon>Bacilli</taxon>
        <taxon>Bacillales</taxon>
        <taxon>Bacillaceae</taxon>
        <taxon>Bacillus</taxon>
        <taxon>Bacillus cereus group</taxon>
    </lineage>
</organism>
<feature type="chain" id="PRO_0000098352" description="Isoleucine--tRNA ligase 1">
    <location>
        <begin position="1"/>
        <end position="921"/>
    </location>
</feature>
<feature type="short sequence motif" description="'HIGH' region">
    <location>
        <begin position="57"/>
        <end position="67"/>
    </location>
</feature>
<feature type="short sequence motif" description="'KMSKS' region">
    <location>
        <begin position="593"/>
        <end position="597"/>
    </location>
</feature>
<feature type="binding site" evidence="1">
    <location>
        <position position="552"/>
    </location>
    <ligand>
        <name>L-isoleucyl-5'-AMP</name>
        <dbReference type="ChEBI" id="CHEBI:178002"/>
    </ligand>
</feature>
<feature type="binding site" evidence="1">
    <location>
        <position position="596"/>
    </location>
    <ligand>
        <name>ATP</name>
        <dbReference type="ChEBI" id="CHEBI:30616"/>
    </ligand>
</feature>
<feature type="binding site" evidence="1">
    <location>
        <position position="888"/>
    </location>
    <ligand>
        <name>Zn(2+)</name>
        <dbReference type="ChEBI" id="CHEBI:29105"/>
    </ligand>
</feature>
<feature type="binding site" evidence="1">
    <location>
        <position position="891"/>
    </location>
    <ligand>
        <name>Zn(2+)</name>
        <dbReference type="ChEBI" id="CHEBI:29105"/>
    </ligand>
</feature>
<feature type="binding site" evidence="1">
    <location>
        <position position="908"/>
    </location>
    <ligand>
        <name>Zn(2+)</name>
        <dbReference type="ChEBI" id="CHEBI:29105"/>
    </ligand>
</feature>
<feature type="binding site" evidence="1">
    <location>
        <position position="911"/>
    </location>
    <ligand>
        <name>Zn(2+)</name>
        <dbReference type="ChEBI" id="CHEBI:29105"/>
    </ligand>
</feature>
<evidence type="ECO:0000255" key="1">
    <source>
        <dbReference type="HAMAP-Rule" id="MF_02002"/>
    </source>
</evidence>